<organism>
    <name type="scientific">Yersinia pestis (strain Pestoides F)</name>
    <dbReference type="NCBI Taxonomy" id="386656"/>
    <lineage>
        <taxon>Bacteria</taxon>
        <taxon>Pseudomonadati</taxon>
        <taxon>Pseudomonadota</taxon>
        <taxon>Gammaproteobacteria</taxon>
        <taxon>Enterobacterales</taxon>
        <taxon>Yersiniaceae</taxon>
        <taxon>Yersinia</taxon>
    </lineage>
</organism>
<feature type="chain" id="PRO_1000016303" description="Glutamine--tRNA ligase">
    <location>
        <begin position="1"/>
        <end position="555"/>
    </location>
</feature>
<feature type="short sequence motif" description="'HIGH' region" evidence="1">
    <location>
        <begin position="34"/>
        <end position="44"/>
    </location>
</feature>
<feature type="short sequence motif" description="'KMSKS' region" evidence="1">
    <location>
        <begin position="268"/>
        <end position="272"/>
    </location>
</feature>
<feature type="binding site" evidence="1">
    <location>
        <begin position="35"/>
        <end position="37"/>
    </location>
    <ligand>
        <name>ATP</name>
        <dbReference type="ChEBI" id="CHEBI:30616"/>
    </ligand>
</feature>
<feature type="binding site" evidence="1">
    <location>
        <begin position="41"/>
        <end position="47"/>
    </location>
    <ligand>
        <name>ATP</name>
        <dbReference type="ChEBI" id="CHEBI:30616"/>
    </ligand>
</feature>
<feature type="binding site" evidence="1">
    <location>
        <position position="67"/>
    </location>
    <ligand>
        <name>L-glutamine</name>
        <dbReference type="ChEBI" id="CHEBI:58359"/>
    </ligand>
</feature>
<feature type="binding site" evidence="1">
    <location>
        <position position="212"/>
    </location>
    <ligand>
        <name>L-glutamine</name>
        <dbReference type="ChEBI" id="CHEBI:58359"/>
    </ligand>
</feature>
<feature type="binding site" evidence="1">
    <location>
        <position position="231"/>
    </location>
    <ligand>
        <name>ATP</name>
        <dbReference type="ChEBI" id="CHEBI:30616"/>
    </ligand>
</feature>
<feature type="binding site" evidence="1">
    <location>
        <begin position="261"/>
        <end position="262"/>
    </location>
    <ligand>
        <name>ATP</name>
        <dbReference type="ChEBI" id="CHEBI:30616"/>
    </ligand>
</feature>
<feature type="binding site" evidence="1">
    <location>
        <begin position="269"/>
        <end position="271"/>
    </location>
    <ligand>
        <name>ATP</name>
        <dbReference type="ChEBI" id="CHEBI:30616"/>
    </ligand>
</feature>
<accession>A4TNX8</accession>
<name>SYQ_YERPP</name>
<gene>
    <name evidence="1" type="primary">glnS</name>
    <name type="ordered locus">YPDSF_2624</name>
</gene>
<protein>
    <recommendedName>
        <fullName evidence="1">Glutamine--tRNA ligase</fullName>
        <ecNumber evidence="1">6.1.1.18</ecNumber>
    </recommendedName>
    <alternativeName>
        <fullName evidence="1">Glutaminyl-tRNA synthetase</fullName>
        <shortName evidence="1">GlnRS</shortName>
    </alternativeName>
</protein>
<keyword id="KW-0030">Aminoacyl-tRNA synthetase</keyword>
<keyword id="KW-0067">ATP-binding</keyword>
<keyword id="KW-0963">Cytoplasm</keyword>
<keyword id="KW-0436">Ligase</keyword>
<keyword id="KW-0547">Nucleotide-binding</keyword>
<keyword id="KW-0648">Protein biosynthesis</keyword>
<dbReference type="EC" id="6.1.1.18" evidence="1"/>
<dbReference type="EMBL" id="CP000668">
    <property type="protein sequence ID" value="ABP40990.1"/>
    <property type="molecule type" value="Genomic_DNA"/>
</dbReference>
<dbReference type="RefSeq" id="WP_002210354.1">
    <property type="nucleotide sequence ID" value="NZ_CP009715.1"/>
</dbReference>
<dbReference type="SMR" id="A4TNX8"/>
<dbReference type="GeneID" id="57976061"/>
<dbReference type="KEGG" id="ypp:YPDSF_2624"/>
<dbReference type="PATRIC" id="fig|386656.14.peg.4150"/>
<dbReference type="GO" id="GO:0005829">
    <property type="term" value="C:cytosol"/>
    <property type="evidence" value="ECO:0007669"/>
    <property type="project" value="TreeGrafter"/>
</dbReference>
<dbReference type="GO" id="GO:0005524">
    <property type="term" value="F:ATP binding"/>
    <property type="evidence" value="ECO:0007669"/>
    <property type="project" value="UniProtKB-UniRule"/>
</dbReference>
<dbReference type="GO" id="GO:0004819">
    <property type="term" value="F:glutamine-tRNA ligase activity"/>
    <property type="evidence" value="ECO:0007669"/>
    <property type="project" value="UniProtKB-UniRule"/>
</dbReference>
<dbReference type="GO" id="GO:0006425">
    <property type="term" value="P:glutaminyl-tRNA aminoacylation"/>
    <property type="evidence" value="ECO:0007669"/>
    <property type="project" value="InterPro"/>
</dbReference>
<dbReference type="GO" id="GO:0006424">
    <property type="term" value="P:glutamyl-tRNA aminoacylation"/>
    <property type="evidence" value="ECO:0007669"/>
    <property type="project" value="UniProtKB-UniRule"/>
</dbReference>
<dbReference type="CDD" id="cd00807">
    <property type="entry name" value="GlnRS_core"/>
    <property type="match status" value="1"/>
</dbReference>
<dbReference type="FunFam" id="1.10.1160.10:FF:000001">
    <property type="entry name" value="Glutamine--tRNA ligase"/>
    <property type="match status" value="1"/>
</dbReference>
<dbReference type="FunFam" id="2.40.240.10:FF:000001">
    <property type="entry name" value="Glutamine--tRNA ligase"/>
    <property type="match status" value="1"/>
</dbReference>
<dbReference type="FunFam" id="2.40.240.10:FF:000003">
    <property type="entry name" value="Glutamine--tRNA ligase"/>
    <property type="match status" value="1"/>
</dbReference>
<dbReference type="FunFam" id="3.90.800.10:FF:000001">
    <property type="entry name" value="Glutamine--tRNA ligase"/>
    <property type="match status" value="1"/>
</dbReference>
<dbReference type="FunFam" id="3.40.50.620:FF:000037">
    <property type="entry name" value="Glutamine--tRNA ligase cytoplasmic"/>
    <property type="match status" value="1"/>
</dbReference>
<dbReference type="Gene3D" id="1.10.1160.10">
    <property type="entry name" value="Glutamyl-trna Synthetase, Domain 2"/>
    <property type="match status" value="1"/>
</dbReference>
<dbReference type="Gene3D" id="3.90.800.10">
    <property type="entry name" value="Glutamyl-tRNA Synthetase, Domain 3"/>
    <property type="match status" value="1"/>
</dbReference>
<dbReference type="Gene3D" id="3.40.50.620">
    <property type="entry name" value="HUPs"/>
    <property type="match status" value="1"/>
</dbReference>
<dbReference type="Gene3D" id="2.40.240.10">
    <property type="entry name" value="Ribosomal Protein L25, Chain P"/>
    <property type="match status" value="2"/>
</dbReference>
<dbReference type="HAMAP" id="MF_00126">
    <property type="entry name" value="Gln_tRNA_synth"/>
    <property type="match status" value="1"/>
</dbReference>
<dbReference type="InterPro" id="IPR001412">
    <property type="entry name" value="aa-tRNA-synth_I_CS"/>
</dbReference>
<dbReference type="InterPro" id="IPR004514">
    <property type="entry name" value="Gln-tRNA-synth"/>
</dbReference>
<dbReference type="InterPro" id="IPR050132">
    <property type="entry name" value="Gln/Glu-tRNA_Ligase"/>
</dbReference>
<dbReference type="InterPro" id="IPR022861">
    <property type="entry name" value="Gln_tRNA_ligase_bac"/>
</dbReference>
<dbReference type="InterPro" id="IPR000924">
    <property type="entry name" value="Glu/Gln-tRNA-synth"/>
</dbReference>
<dbReference type="InterPro" id="IPR020058">
    <property type="entry name" value="Glu/Gln-tRNA-synth_Ib_cat-dom"/>
</dbReference>
<dbReference type="InterPro" id="IPR020059">
    <property type="entry name" value="Glu/Gln-tRNA-synth_Ib_codon-bd"/>
</dbReference>
<dbReference type="InterPro" id="IPR020061">
    <property type="entry name" value="Glu_tRNA_lig_a-bdl"/>
</dbReference>
<dbReference type="InterPro" id="IPR020056">
    <property type="entry name" value="Rbsml_bL25/Gln-tRNA_synth_N"/>
</dbReference>
<dbReference type="InterPro" id="IPR011035">
    <property type="entry name" value="Ribosomal_bL25/Gln-tRNA_synth"/>
</dbReference>
<dbReference type="InterPro" id="IPR014729">
    <property type="entry name" value="Rossmann-like_a/b/a_fold"/>
</dbReference>
<dbReference type="InterPro" id="IPR049437">
    <property type="entry name" value="tRNA-synt_1c_C2"/>
</dbReference>
<dbReference type="NCBIfam" id="TIGR00440">
    <property type="entry name" value="glnS"/>
    <property type="match status" value="1"/>
</dbReference>
<dbReference type="NCBIfam" id="NF011291">
    <property type="entry name" value="PRK14703.1"/>
    <property type="match status" value="1"/>
</dbReference>
<dbReference type="PANTHER" id="PTHR43097:SF5">
    <property type="entry name" value="GLUTAMATE--TRNA LIGASE"/>
    <property type="match status" value="1"/>
</dbReference>
<dbReference type="PANTHER" id="PTHR43097">
    <property type="entry name" value="GLUTAMINE-TRNA LIGASE"/>
    <property type="match status" value="1"/>
</dbReference>
<dbReference type="Pfam" id="PF00749">
    <property type="entry name" value="tRNA-synt_1c"/>
    <property type="match status" value="1"/>
</dbReference>
<dbReference type="Pfam" id="PF03950">
    <property type="entry name" value="tRNA-synt_1c_C"/>
    <property type="match status" value="1"/>
</dbReference>
<dbReference type="Pfam" id="PF20974">
    <property type="entry name" value="tRNA-synt_1c_C2"/>
    <property type="match status" value="1"/>
</dbReference>
<dbReference type="PRINTS" id="PR00987">
    <property type="entry name" value="TRNASYNTHGLU"/>
</dbReference>
<dbReference type="SUPFAM" id="SSF52374">
    <property type="entry name" value="Nucleotidylyl transferase"/>
    <property type="match status" value="1"/>
</dbReference>
<dbReference type="SUPFAM" id="SSF50715">
    <property type="entry name" value="Ribosomal protein L25-like"/>
    <property type="match status" value="1"/>
</dbReference>
<dbReference type="PROSITE" id="PS00178">
    <property type="entry name" value="AA_TRNA_LIGASE_I"/>
    <property type="match status" value="1"/>
</dbReference>
<sequence>MSEAEARPSNFIRQIIDEDLASGKHTSVHTRFPPEPNGYLHIGHAKSICLNFGIAEDYQGQCNLRFDDTNPVKEDVEFVESIKRDVEWLGFTWSGDVRYSSDYFDQLYQYAVELINKGLAYVDELTPEQMREYRGTLTAPGKNSPYRDRSVEENLALFEKMRAGGFAEGTACLRAKIDMASPFIVMRDPVLYRIKFAEHHQSGNKWCIYPMYDFTHCISDALEGITHSLCTLEFQDNRRLYDWVLDNISIDCHPRQYEFSRLNLEYTIMSKRKLNQLVTEKVVEGWDDPRMPTISGLRRRGYTAASIREFCRRIGVTKQDNNVEMMSLESCIRDDLNEHAPRAMAVLDPIKVVIENRAAGEEWLTMPNHPNNPEMGSRQVPFDSEIYIDRADFREEANKQYKRLVLGKEVRLRNAYVIKAERVEKDAEGNVTTLYCSYDAETLNKDPADGRKVKGVIHWVSVAHALPAEIRLYDRLFNVPNPAAAEDFLSTINPESLVIRQGFVEPSLADAVSDKTYQFEREGYFCADSRYSRPGALVFNRTVGLRDTWAAKATQ</sequence>
<comment type="catalytic activity">
    <reaction evidence="1">
        <text>tRNA(Gln) + L-glutamine + ATP = L-glutaminyl-tRNA(Gln) + AMP + diphosphate</text>
        <dbReference type="Rhea" id="RHEA:20121"/>
        <dbReference type="Rhea" id="RHEA-COMP:9662"/>
        <dbReference type="Rhea" id="RHEA-COMP:9681"/>
        <dbReference type="ChEBI" id="CHEBI:30616"/>
        <dbReference type="ChEBI" id="CHEBI:33019"/>
        <dbReference type="ChEBI" id="CHEBI:58359"/>
        <dbReference type="ChEBI" id="CHEBI:78442"/>
        <dbReference type="ChEBI" id="CHEBI:78521"/>
        <dbReference type="ChEBI" id="CHEBI:456215"/>
        <dbReference type="EC" id="6.1.1.18"/>
    </reaction>
</comment>
<comment type="subunit">
    <text evidence="1">Monomer.</text>
</comment>
<comment type="subcellular location">
    <subcellularLocation>
        <location evidence="1">Cytoplasm</location>
    </subcellularLocation>
</comment>
<comment type="similarity">
    <text evidence="1">Belongs to the class-I aminoacyl-tRNA synthetase family.</text>
</comment>
<evidence type="ECO:0000255" key="1">
    <source>
        <dbReference type="HAMAP-Rule" id="MF_00126"/>
    </source>
</evidence>
<reference key="1">
    <citation type="submission" date="2007-02" db="EMBL/GenBank/DDBJ databases">
        <title>Complete sequence of chromosome of Yersinia pestis Pestoides F.</title>
        <authorList>
            <consortium name="US DOE Joint Genome Institute"/>
            <person name="Copeland A."/>
            <person name="Lucas S."/>
            <person name="Lapidus A."/>
            <person name="Barry K."/>
            <person name="Detter J.C."/>
            <person name="Glavina del Rio T."/>
            <person name="Hammon N."/>
            <person name="Israni S."/>
            <person name="Dalin E."/>
            <person name="Tice H."/>
            <person name="Pitluck S."/>
            <person name="Di Bartolo G."/>
            <person name="Chain P."/>
            <person name="Malfatti S."/>
            <person name="Shin M."/>
            <person name="Vergez L."/>
            <person name="Schmutz J."/>
            <person name="Larimer F."/>
            <person name="Land M."/>
            <person name="Hauser L."/>
            <person name="Worsham P."/>
            <person name="Chu M."/>
            <person name="Bearden S."/>
            <person name="Garcia E."/>
            <person name="Richardson P."/>
        </authorList>
    </citation>
    <scope>NUCLEOTIDE SEQUENCE [LARGE SCALE GENOMIC DNA]</scope>
    <source>
        <strain>Pestoides F</strain>
    </source>
</reference>
<proteinExistence type="inferred from homology"/>